<organism>
    <name type="scientific">Staphylococcus haemolyticus (strain JCSC1435)</name>
    <dbReference type="NCBI Taxonomy" id="279808"/>
    <lineage>
        <taxon>Bacteria</taxon>
        <taxon>Bacillati</taxon>
        <taxon>Bacillota</taxon>
        <taxon>Bacilli</taxon>
        <taxon>Bacillales</taxon>
        <taxon>Staphylococcaceae</taxon>
        <taxon>Staphylococcus</taxon>
    </lineage>
</organism>
<sequence length="239" mass="25121">MVQHLSAEEIIQYISDAKKSTPLKVYVNGNFDGVTFPDSFKVFGSDNSKVIFCEADDWKPFYESNQSTITELEIEMDRRNSAIPLKDLTNTNARIEPGAFIREQAIIEDGAVVMMGATINIGAVVGEGTMIDMNATLGGRATTGKNVHVGAGAVLAGVIEPPSASPVVIDDNVLIGANAVILEGVHVGEGAIVAAGAIVTQDVPAGAVVAGTPAKVIKQTSEVEDSKREIVSALRKLND</sequence>
<protein>
    <recommendedName>
        <fullName evidence="1">2,3,4,5-tetrahydropyridine-2,6-dicarboxylate N-acetyltransferase</fullName>
        <ecNumber evidence="1">2.3.1.89</ecNumber>
    </recommendedName>
    <alternativeName>
        <fullName evidence="1">Tetrahydrodipicolinate N-acetyltransferase</fullName>
        <shortName evidence="1">THP acetyltransferase</shortName>
        <shortName evidence="1">Tetrahydropicolinate acetylase</shortName>
    </alternativeName>
</protein>
<dbReference type="EC" id="2.3.1.89" evidence="1"/>
<dbReference type="EMBL" id="AP006716">
    <property type="protein sequence ID" value="BAE04823.1"/>
    <property type="molecule type" value="Genomic_DNA"/>
</dbReference>
<dbReference type="SMR" id="Q4L6A2"/>
<dbReference type="KEGG" id="sha:SH1514"/>
<dbReference type="eggNOG" id="COG2171">
    <property type="taxonomic scope" value="Bacteria"/>
</dbReference>
<dbReference type="HOGENOM" id="CLU_103751_0_0_9"/>
<dbReference type="OrthoDB" id="9788080at2"/>
<dbReference type="UniPathway" id="UPA00034">
    <property type="reaction ID" value="UER00022"/>
</dbReference>
<dbReference type="Proteomes" id="UP000000543">
    <property type="component" value="Chromosome"/>
</dbReference>
<dbReference type="GO" id="GO:0047200">
    <property type="term" value="F:tetrahydrodipicolinate N-acetyltransferase activity"/>
    <property type="evidence" value="ECO:0007669"/>
    <property type="project" value="UniProtKB-EC"/>
</dbReference>
<dbReference type="GO" id="GO:0019877">
    <property type="term" value="P:diaminopimelate biosynthetic process"/>
    <property type="evidence" value="ECO:0007669"/>
    <property type="project" value="UniProtKB-UniRule"/>
</dbReference>
<dbReference type="GO" id="GO:0009089">
    <property type="term" value="P:lysine biosynthetic process via diaminopimelate"/>
    <property type="evidence" value="ECO:0007669"/>
    <property type="project" value="UniProtKB-UniRule"/>
</dbReference>
<dbReference type="CDD" id="cd03350">
    <property type="entry name" value="LbH_THP_succinylT"/>
    <property type="match status" value="1"/>
</dbReference>
<dbReference type="Gene3D" id="2.160.10.10">
    <property type="entry name" value="Hexapeptide repeat proteins"/>
    <property type="match status" value="1"/>
</dbReference>
<dbReference type="Gene3D" id="3.30.70.250">
    <property type="entry name" value="Malonyl-CoA ACP transacylase, ACP-binding"/>
    <property type="match status" value="1"/>
</dbReference>
<dbReference type="HAMAP" id="MF_01691">
    <property type="entry name" value="DapH"/>
    <property type="match status" value="1"/>
</dbReference>
<dbReference type="InterPro" id="IPR019873">
    <property type="entry name" value="DapH"/>
</dbReference>
<dbReference type="InterPro" id="IPR013710">
    <property type="entry name" value="DapH_N"/>
</dbReference>
<dbReference type="InterPro" id="IPR001451">
    <property type="entry name" value="Hexapep"/>
</dbReference>
<dbReference type="InterPro" id="IPR018357">
    <property type="entry name" value="Hexapep_transf_CS"/>
</dbReference>
<dbReference type="InterPro" id="IPR050179">
    <property type="entry name" value="Trans_hexapeptide_repeat"/>
</dbReference>
<dbReference type="InterPro" id="IPR011004">
    <property type="entry name" value="Trimer_LpxA-like_sf"/>
</dbReference>
<dbReference type="NCBIfam" id="TIGR03532">
    <property type="entry name" value="DapD_Ac"/>
    <property type="match status" value="1"/>
</dbReference>
<dbReference type="PANTHER" id="PTHR43300:SF10">
    <property type="entry name" value="2,3,4,5-TETRAHYDROPYRIDINE-2,6-DICARBOXYLATE N-ACETYLTRANSFERASE"/>
    <property type="match status" value="1"/>
</dbReference>
<dbReference type="PANTHER" id="PTHR43300">
    <property type="entry name" value="ACETYLTRANSFERASE"/>
    <property type="match status" value="1"/>
</dbReference>
<dbReference type="Pfam" id="PF08503">
    <property type="entry name" value="DapH_N"/>
    <property type="match status" value="1"/>
</dbReference>
<dbReference type="Pfam" id="PF00132">
    <property type="entry name" value="Hexapep"/>
    <property type="match status" value="1"/>
</dbReference>
<dbReference type="Pfam" id="PF14602">
    <property type="entry name" value="Hexapep_2"/>
    <property type="match status" value="1"/>
</dbReference>
<dbReference type="SUPFAM" id="SSF51161">
    <property type="entry name" value="Trimeric LpxA-like enzymes"/>
    <property type="match status" value="1"/>
</dbReference>
<dbReference type="PROSITE" id="PS00101">
    <property type="entry name" value="HEXAPEP_TRANSFERASES"/>
    <property type="match status" value="1"/>
</dbReference>
<feature type="chain" id="PRO_0000376704" description="2,3,4,5-tetrahydropyridine-2,6-dicarboxylate N-acetyltransferase">
    <location>
        <begin position="1"/>
        <end position="239"/>
    </location>
</feature>
<gene>
    <name evidence="1" type="primary">dapH</name>
    <name type="ordered locus">SH1514</name>
</gene>
<name>DAPH_STAHJ</name>
<keyword id="KW-0012">Acyltransferase</keyword>
<keyword id="KW-0028">Amino-acid biosynthesis</keyword>
<keyword id="KW-0220">Diaminopimelate biosynthesis</keyword>
<keyword id="KW-0457">Lysine biosynthesis</keyword>
<keyword id="KW-0677">Repeat</keyword>
<keyword id="KW-0808">Transferase</keyword>
<evidence type="ECO:0000255" key="1">
    <source>
        <dbReference type="HAMAP-Rule" id="MF_01691"/>
    </source>
</evidence>
<comment type="function">
    <text evidence="1">Catalyzes the transfer of an acetyl group from acetyl-CoA to tetrahydrodipicolinate.</text>
</comment>
<comment type="catalytic activity">
    <reaction evidence="1">
        <text>(S)-2,3,4,5-tetrahydrodipicolinate + acetyl-CoA + H2O = L-2-acetamido-6-oxoheptanedioate + CoA</text>
        <dbReference type="Rhea" id="RHEA:13085"/>
        <dbReference type="ChEBI" id="CHEBI:15377"/>
        <dbReference type="ChEBI" id="CHEBI:16845"/>
        <dbReference type="ChEBI" id="CHEBI:57287"/>
        <dbReference type="ChEBI" id="CHEBI:57288"/>
        <dbReference type="ChEBI" id="CHEBI:58117"/>
        <dbReference type="EC" id="2.3.1.89"/>
    </reaction>
</comment>
<comment type="pathway">
    <text evidence="1">Amino-acid biosynthesis; L-lysine biosynthesis via DAP pathway; LL-2,6-diaminopimelate from (S)-tetrahydrodipicolinate (acetylase route): step 1/3.</text>
</comment>
<comment type="similarity">
    <text evidence="1">Belongs to the transferase hexapeptide repeat family. DapH subfamily.</text>
</comment>
<accession>Q4L6A2</accession>
<reference key="1">
    <citation type="journal article" date="2005" name="J. Bacteriol.">
        <title>Whole-genome sequencing of Staphylococcus haemolyticus uncovers the extreme plasticity of its genome and the evolution of human-colonizing staphylococcal species.</title>
        <authorList>
            <person name="Takeuchi F."/>
            <person name="Watanabe S."/>
            <person name="Baba T."/>
            <person name="Yuzawa H."/>
            <person name="Ito T."/>
            <person name="Morimoto Y."/>
            <person name="Kuroda M."/>
            <person name="Cui L."/>
            <person name="Takahashi M."/>
            <person name="Ankai A."/>
            <person name="Baba S."/>
            <person name="Fukui S."/>
            <person name="Lee J.C."/>
            <person name="Hiramatsu K."/>
        </authorList>
    </citation>
    <scope>NUCLEOTIDE SEQUENCE [LARGE SCALE GENOMIC DNA]</scope>
    <source>
        <strain>JCSC1435</strain>
    </source>
</reference>
<proteinExistence type="inferred from homology"/>